<accession>P49708</accession>
<accession>D3GGX1</accession>
<accession>Q53YS2</accession>
<dbReference type="EMBL" id="U27465">
    <property type="protein sequence ID" value="AAC59723.1"/>
    <property type="molecule type" value="mRNA"/>
</dbReference>
<dbReference type="EMBL" id="X99774">
    <property type="protein sequence ID" value="CAA68118.1"/>
    <property type="molecule type" value="mRNA"/>
</dbReference>
<dbReference type="EMBL" id="Y07922">
    <property type="protein sequence ID" value="CAA69227.1"/>
    <property type="molecule type" value="Genomic_DNA"/>
</dbReference>
<dbReference type="EMBL" id="U96875">
    <property type="protein sequence ID" value="AAG27918.1"/>
    <property type="molecule type" value="Genomic_DNA"/>
</dbReference>
<dbReference type="EMBL" id="U96872">
    <property type="protein sequence ID" value="AAG27918.1"/>
    <property type="status" value="JOINED"/>
    <property type="molecule type" value="Genomic_DNA"/>
</dbReference>
<dbReference type="EMBL" id="U96873">
    <property type="protein sequence ID" value="AAG27918.1"/>
    <property type="status" value="JOINED"/>
    <property type="molecule type" value="Genomic_DNA"/>
</dbReference>
<dbReference type="EMBL" id="U96874">
    <property type="protein sequence ID" value="AAG27918.1"/>
    <property type="status" value="JOINED"/>
    <property type="molecule type" value="Genomic_DNA"/>
</dbReference>
<dbReference type="EMBL" id="AF424744">
    <property type="protein sequence ID" value="AAL17845.1"/>
    <property type="molecule type" value="mRNA"/>
</dbReference>
<dbReference type="EMBL" id="AY501004">
    <property type="protein sequence ID" value="AAR98863.1"/>
    <property type="molecule type" value="mRNA"/>
</dbReference>
<dbReference type="EMBL" id="FJ788637">
    <property type="protein sequence ID" value="ACY72343.1"/>
    <property type="molecule type" value="mRNA"/>
</dbReference>
<dbReference type="PIR" id="JC6536">
    <property type="entry name" value="JC6536"/>
</dbReference>
<dbReference type="RefSeq" id="NP_990480.1">
    <property type="nucleotide sequence ID" value="NM_205149.1"/>
</dbReference>
<dbReference type="SMR" id="P49708"/>
<dbReference type="FunCoup" id="P49708">
    <property type="interactions" value="106"/>
</dbReference>
<dbReference type="STRING" id="9031.ENSGALP00000016086"/>
<dbReference type="GlyCosmos" id="P49708">
    <property type="glycosylation" value="2 sites, No reported glycans"/>
</dbReference>
<dbReference type="GlyGen" id="P49708">
    <property type="glycosylation" value="2 sites"/>
</dbReference>
<dbReference type="PaxDb" id="9031-ENSGALP00000016086"/>
<dbReference type="Ensembl" id="ENSGALT00010028555.1">
    <property type="protein sequence ID" value="ENSGALP00010016393.1"/>
    <property type="gene ID" value="ENSGALG00010011933.1"/>
</dbReference>
<dbReference type="GeneID" id="396054"/>
<dbReference type="KEGG" id="gga:396054"/>
<dbReference type="CTD" id="396054"/>
<dbReference type="VEuPathDB" id="HostDB:geneid_396054"/>
<dbReference type="eggNOG" id="ENOG502SBGW">
    <property type="taxonomic scope" value="Eukaryota"/>
</dbReference>
<dbReference type="GeneTree" id="ENSGT00390000007831"/>
<dbReference type="HOGENOM" id="CLU_135106_0_0_1"/>
<dbReference type="InParanoid" id="P49708"/>
<dbReference type="OMA" id="QIVSMYL"/>
<dbReference type="OrthoDB" id="9937106at2759"/>
<dbReference type="PhylomeDB" id="P49708"/>
<dbReference type="TreeFam" id="TF336308"/>
<dbReference type="Reactome" id="R-GGA-877300">
    <property type="pathway name" value="Interferon gamma signaling"/>
</dbReference>
<dbReference type="Reactome" id="R-GGA-877312">
    <property type="pathway name" value="Regulation of IFNG signaling"/>
</dbReference>
<dbReference type="Reactome" id="R-GGA-9732724">
    <property type="pathway name" value="IFNG signaling activates MAPKs"/>
</dbReference>
<dbReference type="PRO" id="PR:P49708"/>
<dbReference type="Proteomes" id="UP000000539">
    <property type="component" value="Chromosome 1"/>
</dbReference>
<dbReference type="Bgee" id="ENSGALG00000009903">
    <property type="expression patterns" value="Expressed in granulocyte and 6 other cell types or tissues"/>
</dbReference>
<dbReference type="GO" id="GO:0005615">
    <property type="term" value="C:extracellular space"/>
    <property type="evidence" value="ECO:0000314"/>
    <property type="project" value="AgBase"/>
</dbReference>
<dbReference type="GO" id="GO:0005125">
    <property type="term" value="F:cytokine activity"/>
    <property type="evidence" value="ECO:0000318"/>
    <property type="project" value="GO_Central"/>
</dbReference>
<dbReference type="GO" id="GO:0005133">
    <property type="term" value="F:type II interferon receptor binding"/>
    <property type="evidence" value="ECO:0007669"/>
    <property type="project" value="InterPro"/>
</dbReference>
<dbReference type="GO" id="GO:0002250">
    <property type="term" value="P:adaptive immune response"/>
    <property type="evidence" value="ECO:0000318"/>
    <property type="project" value="GO_Central"/>
</dbReference>
<dbReference type="GO" id="GO:0140374">
    <property type="term" value="P:antiviral innate immune response"/>
    <property type="evidence" value="ECO:0000314"/>
    <property type="project" value="GO_Central"/>
</dbReference>
<dbReference type="GO" id="GO:0048143">
    <property type="term" value="P:astrocyte activation"/>
    <property type="evidence" value="ECO:0007669"/>
    <property type="project" value="Ensembl"/>
</dbReference>
<dbReference type="GO" id="GO:0097696">
    <property type="term" value="P:cell surface receptor signaling pathway via STAT"/>
    <property type="evidence" value="ECO:0007669"/>
    <property type="project" value="Ensembl"/>
</dbReference>
<dbReference type="GO" id="GO:0097191">
    <property type="term" value="P:extrinsic apoptotic signaling pathway"/>
    <property type="evidence" value="ECO:0007669"/>
    <property type="project" value="Ensembl"/>
</dbReference>
<dbReference type="GO" id="GO:0038096">
    <property type="term" value="P:Fc-gamma receptor signaling pathway involved in phagocytosis"/>
    <property type="evidence" value="ECO:0007669"/>
    <property type="project" value="Ensembl"/>
</dbReference>
<dbReference type="GO" id="GO:0006959">
    <property type="term" value="P:humoral immune response"/>
    <property type="evidence" value="ECO:0000318"/>
    <property type="project" value="GO_Central"/>
</dbReference>
<dbReference type="GO" id="GO:0042116">
    <property type="term" value="P:macrophage activation"/>
    <property type="evidence" value="ECO:0000314"/>
    <property type="project" value="AgBase"/>
</dbReference>
<dbReference type="GO" id="GO:0002281">
    <property type="term" value="P:macrophage activation involved in immune response"/>
    <property type="evidence" value="ECO:0007669"/>
    <property type="project" value="Ensembl"/>
</dbReference>
<dbReference type="GO" id="GO:0030225">
    <property type="term" value="P:macrophage differentiation"/>
    <property type="evidence" value="ECO:0007669"/>
    <property type="project" value="Ensembl"/>
</dbReference>
<dbReference type="GO" id="GO:0001774">
    <property type="term" value="P:microglial cell activation"/>
    <property type="evidence" value="ECO:0007669"/>
    <property type="project" value="Ensembl"/>
</dbReference>
<dbReference type="GO" id="GO:0045892">
    <property type="term" value="P:negative regulation of DNA-templated transcription"/>
    <property type="evidence" value="ECO:0007669"/>
    <property type="project" value="Ensembl"/>
</dbReference>
<dbReference type="GO" id="GO:0032700">
    <property type="term" value="P:negative regulation of interleukin-17 production"/>
    <property type="evidence" value="ECO:0007669"/>
    <property type="project" value="Ensembl"/>
</dbReference>
<dbReference type="GO" id="GO:0048662">
    <property type="term" value="P:negative regulation of smooth muscle cell proliferation"/>
    <property type="evidence" value="ECO:0007669"/>
    <property type="project" value="Ensembl"/>
</dbReference>
<dbReference type="GO" id="GO:0002537">
    <property type="term" value="P:nitric oxide production involved in inflammatory response"/>
    <property type="evidence" value="ECO:0000314"/>
    <property type="project" value="GO_Central"/>
</dbReference>
<dbReference type="GO" id="GO:1902004">
    <property type="term" value="P:positive regulation of amyloid-beta formation"/>
    <property type="evidence" value="ECO:0007669"/>
    <property type="project" value="Ensembl"/>
</dbReference>
<dbReference type="GO" id="GO:0010508">
    <property type="term" value="P:positive regulation of autophagy"/>
    <property type="evidence" value="ECO:0000250"/>
    <property type="project" value="UniProtKB"/>
</dbReference>
<dbReference type="GO" id="GO:0032834">
    <property type="term" value="P:positive regulation of CD4-positive, CD25-positive, alpha-beta regulatory T cell differentiation involved in immune response"/>
    <property type="evidence" value="ECO:0007669"/>
    <property type="project" value="Ensembl"/>
</dbReference>
<dbReference type="GO" id="GO:0032722">
    <property type="term" value="P:positive regulation of chemokine production"/>
    <property type="evidence" value="ECO:0007669"/>
    <property type="project" value="Ensembl"/>
</dbReference>
<dbReference type="GO" id="GO:0010634">
    <property type="term" value="P:positive regulation of epithelial cell migration"/>
    <property type="evidence" value="ECO:0007669"/>
    <property type="project" value="Ensembl"/>
</dbReference>
<dbReference type="GO" id="GO:0060552">
    <property type="term" value="P:positive regulation of fructose 1,6-bisphosphate metabolic process"/>
    <property type="evidence" value="ECO:0007669"/>
    <property type="project" value="Ensembl"/>
</dbReference>
<dbReference type="GO" id="GO:0050729">
    <property type="term" value="P:positive regulation of inflammatory response"/>
    <property type="evidence" value="ECO:0007669"/>
    <property type="project" value="Ensembl"/>
</dbReference>
<dbReference type="GO" id="GO:0032735">
    <property type="term" value="P:positive regulation of interleukin-12 production"/>
    <property type="evidence" value="ECO:0007669"/>
    <property type="project" value="Ensembl"/>
</dbReference>
<dbReference type="GO" id="GO:0032747">
    <property type="term" value="P:positive regulation of interleukin-23 production"/>
    <property type="evidence" value="ECO:0007669"/>
    <property type="project" value="Ensembl"/>
</dbReference>
<dbReference type="GO" id="GO:0032755">
    <property type="term" value="P:positive regulation of interleukin-6 production"/>
    <property type="evidence" value="ECO:0007669"/>
    <property type="project" value="Ensembl"/>
</dbReference>
<dbReference type="GO" id="GO:0051044">
    <property type="term" value="P:positive regulation of membrane protein ectodomain proteolysis"/>
    <property type="evidence" value="ECO:0007669"/>
    <property type="project" value="Ensembl"/>
</dbReference>
<dbReference type="GO" id="GO:0050769">
    <property type="term" value="P:positive regulation of neurogenesis"/>
    <property type="evidence" value="ECO:0007669"/>
    <property type="project" value="Ensembl"/>
</dbReference>
<dbReference type="GO" id="GO:0045429">
    <property type="term" value="P:positive regulation of nitric oxide biosynthetic process"/>
    <property type="evidence" value="ECO:0007669"/>
    <property type="project" value="Ensembl"/>
</dbReference>
<dbReference type="GO" id="GO:0045672">
    <property type="term" value="P:positive regulation of osteoclast differentiation"/>
    <property type="evidence" value="ECO:0007669"/>
    <property type="project" value="Ensembl"/>
</dbReference>
<dbReference type="GO" id="GO:0042307">
    <property type="term" value="P:positive regulation of protein import into nucleus"/>
    <property type="evidence" value="ECO:0007669"/>
    <property type="project" value="Ensembl"/>
</dbReference>
<dbReference type="GO" id="GO:0031334">
    <property type="term" value="P:positive regulation of protein-containing complex assembly"/>
    <property type="evidence" value="ECO:0007669"/>
    <property type="project" value="Ensembl"/>
</dbReference>
<dbReference type="GO" id="GO:0034393">
    <property type="term" value="P:positive regulation of smooth muscle cell apoptotic process"/>
    <property type="evidence" value="ECO:0007669"/>
    <property type="project" value="Ensembl"/>
</dbReference>
<dbReference type="GO" id="GO:2000309">
    <property type="term" value="P:positive regulation of tumor necrosis factor (ligand) superfamily member 11 production"/>
    <property type="evidence" value="ECO:0007669"/>
    <property type="project" value="Ensembl"/>
</dbReference>
<dbReference type="GO" id="GO:0060557">
    <property type="term" value="P:positive regulation of vitamin D biosynthetic process"/>
    <property type="evidence" value="ECO:0007669"/>
    <property type="project" value="Ensembl"/>
</dbReference>
<dbReference type="GO" id="GO:0001959">
    <property type="term" value="P:regulation of cytokine-mediated signaling pathway"/>
    <property type="evidence" value="ECO:0000304"/>
    <property type="project" value="AgBase"/>
</dbReference>
<dbReference type="GO" id="GO:0050796">
    <property type="term" value="P:regulation of insulin secretion"/>
    <property type="evidence" value="ECO:0007669"/>
    <property type="project" value="Ensembl"/>
</dbReference>
<dbReference type="GO" id="GO:0070673">
    <property type="term" value="P:response to interleukin-18"/>
    <property type="evidence" value="ECO:0000314"/>
    <property type="project" value="AgBase"/>
</dbReference>
<dbReference type="GO" id="GO:0060333">
    <property type="term" value="P:type II interferon-mediated signaling pathway"/>
    <property type="evidence" value="ECO:0007669"/>
    <property type="project" value="Ensembl"/>
</dbReference>
<dbReference type="GO" id="GO:0038196">
    <property type="term" value="P:type III interferon-mediated signaling pathway"/>
    <property type="evidence" value="ECO:0007669"/>
    <property type="project" value="Ensembl"/>
</dbReference>
<dbReference type="FunFam" id="1.20.1250.10:FF:000007">
    <property type="entry name" value="Interferon gamma"/>
    <property type="match status" value="1"/>
</dbReference>
<dbReference type="Gene3D" id="1.20.1250.10">
    <property type="match status" value="1"/>
</dbReference>
<dbReference type="InterPro" id="IPR009079">
    <property type="entry name" value="4_helix_cytokine-like_core"/>
</dbReference>
<dbReference type="InterPro" id="IPR002069">
    <property type="entry name" value="Interferon_gamma"/>
</dbReference>
<dbReference type="PANTHER" id="PTHR11419">
    <property type="entry name" value="INTERFERON GAMMA"/>
    <property type="match status" value="1"/>
</dbReference>
<dbReference type="PANTHER" id="PTHR11419:SF0">
    <property type="entry name" value="INTERFERON GAMMA"/>
    <property type="match status" value="1"/>
</dbReference>
<dbReference type="Pfam" id="PF00714">
    <property type="entry name" value="IFN-gamma"/>
    <property type="match status" value="1"/>
</dbReference>
<dbReference type="PIRSF" id="PIRSF001936">
    <property type="entry name" value="IFN-gamma"/>
    <property type="match status" value="1"/>
</dbReference>
<dbReference type="SUPFAM" id="SSF47266">
    <property type="entry name" value="4-helical cytokines"/>
    <property type="match status" value="1"/>
</dbReference>
<evidence type="ECO:0000250" key="1"/>
<evidence type="ECO:0000255" key="2"/>
<evidence type="ECO:0000305" key="3"/>
<proteinExistence type="evidence at transcript level"/>
<keyword id="KW-0051">Antiviral defense</keyword>
<keyword id="KW-0202">Cytokine</keyword>
<keyword id="KW-0325">Glycoprotein</keyword>
<keyword id="KW-0341">Growth regulation</keyword>
<keyword id="KW-1185">Reference proteome</keyword>
<keyword id="KW-0964">Secreted</keyword>
<keyword id="KW-0732">Signal</keyword>
<gene>
    <name type="primary">IFNG</name>
</gene>
<protein>
    <recommendedName>
        <fullName>Interferon gamma</fullName>
        <shortName>IFN-gamma</shortName>
    </recommendedName>
</protein>
<feature type="signal peptide" evidence="2">
    <location>
        <begin position="1"/>
        <end position="19"/>
    </location>
</feature>
<feature type="chain" id="PRO_0000016463" description="Interferon gamma">
    <location>
        <begin position="20"/>
        <end position="164"/>
    </location>
</feature>
<feature type="glycosylation site" description="N-linked (GlcNAc...) asparagine" evidence="2">
    <location>
        <position position="42"/>
    </location>
</feature>
<feature type="glycosylation site" description="N-linked (GlcNAc...) asparagine" evidence="2">
    <location>
        <position position="61"/>
    </location>
</feature>
<comment type="function">
    <text evidence="1">Produced by lymphocytes activated by specific antigens or mitogens. IFN-gamma, in addition to having antiviral activity, has important immunoregulatory functions. It is a potent activator of macrophages, it has antiproliferative effects on transformed cells and it can potentiate the antiviral and antitumor effects of the type I interferons (By similarity).</text>
</comment>
<comment type="subunit">
    <text evidence="1">Homodimer.</text>
</comment>
<comment type="subcellular location">
    <subcellularLocation>
        <location>Secreted</location>
    </subcellularLocation>
</comment>
<comment type="similarity">
    <text evidence="3">Belongs to the type II (or gamma) interferon family.</text>
</comment>
<organism>
    <name type="scientific">Gallus gallus</name>
    <name type="common">Chicken</name>
    <dbReference type="NCBI Taxonomy" id="9031"/>
    <lineage>
        <taxon>Eukaryota</taxon>
        <taxon>Metazoa</taxon>
        <taxon>Chordata</taxon>
        <taxon>Craniata</taxon>
        <taxon>Vertebrata</taxon>
        <taxon>Euteleostomi</taxon>
        <taxon>Archelosauria</taxon>
        <taxon>Archosauria</taxon>
        <taxon>Dinosauria</taxon>
        <taxon>Saurischia</taxon>
        <taxon>Theropoda</taxon>
        <taxon>Coelurosauria</taxon>
        <taxon>Aves</taxon>
        <taxon>Neognathae</taxon>
        <taxon>Galloanserae</taxon>
        <taxon>Galliformes</taxon>
        <taxon>Phasianidae</taxon>
        <taxon>Phasianinae</taxon>
        <taxon>Gallus</taxon>
    </lineage>
</organism>
<reference key="1">
    <citation type="journal article" date="1995" name="J. Interferon Cytokine Res.">
        <title>Cloning and expression of the chicken interferon-gamma gene.</title>
        <authorList>
            <person name="Digby M.R."/>
            <person name="Lowenthal J.W."/>
        </authorList>
    </citation>
    <scope>NUCLEOTIDE SEQUENCE [MRNA]</scope>
</reference>
<reference key="2">
    <citation type="journal article" date="1996" name="Eur. J. Immunol.">
        <title>Biological properties of recombinant chicken interferon-gamma.</title>
        <authorList>
            <person name="Weining K.C."/>
            <person name="Schultz U."/>
            <person name="Muenster U."/>
            <person name="Kaspers B."/>
            <person name="Staeheli P."/>
        </authorList>
    </citation>
    <scope>NUCLEOTIDE SEQUENCE [MRNA]</scope>
</reference>
<reference key="3">
    <citation type="journal article" date="1998" name="Gene">
        <title>Structure of the chicken interferon-gamma gene, and comparison to mammalian homologues.</title>
        <authorList>
            <person name="Kaiser P."/>
            <person name="Wain H.M."/>
            <person name="Rothwell L."/>
        </authorList>
    </citation>
    <scope>NUCLEOTIDE SEQUENCE [GENOMIC DNA]</scope>
    <source>
        <strain>N LINE</strain>
    </source>
</reference>
<reference key="4">
    <citation type="submission" date="1997-04" db="EMBL/GenBank/DDBJ databases">
        <title>Molecular genetic analysis of chicken interferon gamma gene.</title>
        <authorList>
            <person name="Song K.D."/>
            <person name="Kim D.K."/>
            <person name="Choi K.D."/>
            <person name="Lillehoj H.S."/>
            <person name="Han I.K."/>
            <person name="Han J.Y."/>
        </authorList>
    </citation>
    <scope>NUCLEOTIDE SEQUENCE [GENOMIC DNA]</scope>
    <source>
        <strain>White leghorn</strain>
        <tissue>Spleen</tissue>
    </source>
</reference>
<reference key="5">
    <citation type="submission" date="2001-09" db="EMBL/GenBank/DDBJ databases">
        <title>Chicken interferon-gamma.</title>
        <authorList>
            <person name="Lv Y.Z."/>
            <person name="Cao Y.C."/>
            <person name="Bi Y.Z."/>
        </authorList>
    </citation>
    <scope>NUCLEOTIDE SEQUENCE [MRNA]</scope>
    <source>
        <tissue>Spleen</tissue>
    </source>
</reference>
<reference key="6">
    <citation type="submission" date="2003-12" db="EMBL/GenBank/DDBJ databases">
        <title>Cloning and expression of the chicken interferon-gamma gene.</title>
        <authorList>
            <person name="Bao M."/>
            <person name="Zhong D."/>
            <person name="Xu F."/>
            <person name="Yu W."/>
        </authorList>
    </citation>
    <scope>NUCLEOTIDE SEQUENCE [MRNA]</scope>
    <source>
        <tissue>Spleen</tissue>
    </source>
</reference>
<reference key="7">
    <citation type="submission" date="2009-02" db="EMBL/GenBank/DDBJ databases">
        <title>Cloning and sequence analysis of interferon gamma of China Lushi chicken.</title>
        <authorList>
            <person name="Zhang X."/>
            <person name="Zhang C."/>
            <person name="Li Y."/>
            <person name="Cheng X."/>
            <person name="Wu T."/>
        </authorList>
    </citation>
    <scope>NUCLEOTIDE SEQUENCE [MRNA]</scope>
    <source>
        <tissue>Peripheral blood lymphocyte</tissue>
    </source>
</reference>
<name>IFNG_CHICK</name>
<sequence length="164" mass="18953">MTCQTYNLFVLSVIMIYYGHTASSLNLVQLQDDIDKLKADFNSSHSDVADGGPIIVEKLKNWTERNEKRIILSQIVSMYLEMLENTDKSKPHIKHISEELYTLKNNLPDGVKKVKDIMDLAKLPMNDLRIQRKAANELFSILQKLVDPPSFKRKRSQSQRRCNC</sequence>